<accession>Q4J894</accession>
<name>TRM10_SULAC</name>
<organism>
    <name type="scientific">Sulfolobus acidocaldarius (strain ATCC 33909 / DSM 639 / JCM 8929 / NBRC 15157 / NCIMB 11770)</name>
    <dbReference type="NCBI Taxonomy" id="330779"/>
    <lineage>
        <taxon>Archaea</taxon>
        <taxon>Thermoproteota</taxon>
        <taxon>Thermoprotei</taxon>
        <taxon>Sulfolobales</taxon>
        <taxon>Sulfolobaceae</taxon>
        <taxon>Sulfolobus</taxon>
    </lineage>
</organism>
<proteinExistence type="evidence at protein level"/>
<keyword id="KW-0002">3D-structure</keyword>
<keyword id="KW-0963">Cytoplasm</keyword>
<keyword id="KW-0489">Methyltransferase</keyword>
<keyword id="KW-1185">Reference proteome</keyword>
<keyword id="KW-0949">S-adenosyl-L-methionine</keyword>
<keyword id="KW-0808">Transferase</keyword>
<keyword id="KW-0819">tRNA processing</keyword>
<gene>
    <name type="ordered locus">Saci_1677</name>
</gene>
<protein>
    <recommendedName>
        <fullName>tRNA (adenine(9)-N1)-methyltransferase</fullName>
        <ecNumber>2.1.1.218</ecNumber>
    </recommendedName>
    <alternativeName>
        <fullName>tRNA(m1A9)-methyltransferase</fullName>
        <shortName>tRNA(m1A9)MTase</shortName>
    </alternativeName>
</protein>
<sequence length="292" mass="33153">MTLAKVFSQKLRELGISSIYIGHERPSLQSLAIKMLLKNYGLVEERREGMLITQDHGIKLISGKGTETSRYTFRKGGKKVSIHLPEYPKMVIDLGLFEFLNEEEKEKTLLQVDLCLSVIRKFLWDGNLTVVGKADYVLGRANIVQSLSLSDEDNPVILDPYGDVVATDQILRDHNVFVIGGIVDKGRRLDRATERLALSRGYSFPRVKIQLRGSIIGVPDEINKILEIILRVKELDQSLEEAIISLQSKSDKISRLLHDVQLYGMEVLEEEARWLRADDKVIEIVRSRLGKN</sequence>
<dbReference type="EC" id="2.1.1.218"/>
<dbReference type="EMBL" id="CP000077">
    <property type="protein sequence ID" value="AAY80987.1"/>
    <property type="molecule type" value="Genomic_DNA"/>
</dbReference>
<dbReference type="RefSeq" id="WP_011278489.1">
    <property type="nucleotide sequence ID" value="NC_007181.1"/>
</dbReference>
<dbReference type="PDB" id="5A7T">
    <property type="method" value="X-ray"/>
    <property type="resolution" value="2.40 A"/>
    <property type="chains" value="A=1-249"/>
</dbReference>
<dbReference type="PDB" id="5A7Y">
    <property type="method" value="X-ray"/>
    <property type="resolution" value="2.50 A"/>
    <property type="chains" value="A/B=1-292"/>
</dbReference>
<dbReference type="PDB" id="5A7Z">
    <property type="method" value="X-ray"/>
    <property type="resolution" value="2.10 A"/>
    <property type="chains" value="A=1-249"/>
</dbReference>
<dbReference type="PDBsum" id="5A7T"/>
<dbReference type="PDBsum" id="5A7Y"/>
<dbReference type="PDBsum" id="5A7Z"/>
<dbReference type="SMR" id="Q4J894"/>
<dbReference type="STRING" id="330779.Saci_1677"/>
<dbReference type="GeneID" id="14552168"/>
<dbReference type="KEGG" id="sai:Saci_1677"/>
<dbReference type="PATRIC" id="fig|330779.12.peg.1612"/>
<dbReference type="eggNOG" id="arCOG00967">
    <property type="taxonomic scope" value="Archaea"/>
</dbReference>
<dbReference type="HOGENOM" id="CLU_061952_0_0_2"/>
<dbReference type="BioCyc" id="MetaCyc:SACI_1677-MONOMER"/>
<dbReference type="BRENDA" id="2.1.1.218">
    <property type="organism ID" value="6160"/>
</dbReference>
<dbReference type="EvolutionaryTrace" id="Q4J894"/>
<dbReference type="Proteomes" id="UP000001018">
    <property type="component" value="Chromosome"/>
</dbReference>
<dbReference type="GO" id="GO:0005737">
    <property type="term" value="C:cytoplasm"/>
    <property type="evidence" value="ECO:0007669"/>
    <property type="project" value="UniProtKB-SubCell"/>
</dbReference>
<dbReference type="GO" id="GO:0160106">
    <property type="term" value="F:tRNA (adenine(9)-N1)-methyltransferase activity"/>
    <property type="evidence" value="ECO:0000314"/>
    <property type="project" value="UniProtKB"/>
</dbReference>
<dbReference type="GO" id="GO:0030488">
    <property type="term" value="P:tRNA methylation"/>
    <property type="evidence" value="ECO:0007669"/>
    <property type="project" value="InterPro"/>
</dbReference>
<dbReference type="GO" id="GO:0008033">
    <property type="term" value="P:tRNA processing"/>
    <property type="evidence" value="ECO:0000314"/>
    <property type="project" value="UniProtKB"/>
</dbReference>
<dbReference type="Gene3D" id="3.40.1280.30">
    <property type="match status" value="1"/>
</dbReference>
<dbReference type="InterPro" id="IPR028564">
    <property type="entry name" value="MT_TRM10-typ"/>
</dbReference>
<dbReference type="InterPro" id="IPR038459">
    <property type="entry name" value="MT_TRM10-typ_sf"/>
</dbReference>
<dbReference type="InterPro" id="IPR053623">
    <property type="entry name" value="TRM10_methyltransferase"/>
</dbReference>
<dbReference type="InterPro" id="IPR016742">
    <property type="entry name" value="tRNA_m1G_mtfrase_arc"/>
</dbReference>
<dbReference type="NCBIfam" id="NF041071">
    <property type="entry name" value="Trm10_mtase_Thprot"/>
    <property type="match status" value="1"/>
</dbReference>
<dbReference type="PIRSF" id="PIRSF018978">
    <property type="entry name" value="tRNA_m1G_mtfrase_arc_prd"/>
    <property type="match status" value="1"/>
</dbReference>
<dbReference type="PROSITE" id="PS51675">
    <property type="entry name" value="SAM_MT_TRM10"/>
    <property type="match status" value="1"/>
</dbReference>
<reference key="1">
    <citation type="journal article" date="2005" name="J. Bacteriol.">
        <title>The genome of Sulfolobus acidocaldarius, a model organism of the Crenarchaeota.</title>
        <authorList>
            <person name="Chen L."/>
            <person name="Bruegger K."/>
            <person name="Skovgaard M."/>
            <person name="Redder P."/>
            <person name="She Q."/>
            <person name="Torarinsson E."/>
            <person name="Greve B."/>
            <person name="Awayez M."/>
            <person name="Zibat A."/>
            <person name="Klenk H.-P."/>
            <person name="Garrett R.A."/>
        </authorList>
    </citation>
    <scope>NUCLEOTIDE SEQUENCE [LARGE SCALE GENOMIC DNA]</scope>
    <source>
        <strain>ATCC 33909 / DSM 639 / JCM 8929 / NBRC 15157 / NCIMB 11770</strain>
    </source>
</reference>
<reference key="2">
    <citation type="journal article" date="2010" name="Nucleic Acids Res.">
        <title>New archaeal methyltransferases forming 1-methyladenosine or 1-methyladenosine and 1-methylguanosine at position 9 of tRNA.</title>
        <authorList>
            <person name="Kempenaers M."/>
            <person name="Roovers M."/>
            <person name="Oudjama Y."/>
            <person name="Tkaczuk K.L."/>
            <person name="Bujnicki J.M."/>
            <person name="Droogmans L."/>
        </authorList>
    </citation>
    <scope>FUNCTION</scope>
    <scope>CATALYTIC ACTIVITY</scope>
</reference>
<feature type="chain" id="PRO_0000407927" description="tRNA (adenine(9)-N1)-methyltransferase">
    <location>
        <begin position="1"/>
        <end position="292"/>
    </location>
</feature>
<feature type="domain" description="SAM-dependent MTase TRM10-type" evidence="1">
    <location>
        <begin position="72"/>
        <end position="253"/>
    </location>
</feature>
<feature type="helix" evidence="6">
    <location>
        <begin position="2"/>
        <end position="13"/>
    </location>
</feature>
<feature type="strand" evidence="6">
    <location>
        <begin position="18"/>
        <end position="20"/>
    </location>
</feature>
<feature type="helix" evidence="6">
    <location>
        <begin position="28"/>
        <end position="37"/>
    </location>
</feature>
<feature type="strand" evidence="6">
    <location>
        <begin position="38"/>
        <end position="55"/>
    </location>
</feature>
<feature type="strand" evidence="6">
    <location>
        <begin position="58"/>
        <end position="75"/>
    </location>
</feature>
<feature type="strand" evidence="6">
    <location>
        <begin position="88"/>
        <end position="93"/>
    </location>
</feature>
<feature type="helix" evidence="6">
    <location>
        <begin position="97"/>
        <end position="99"/>
    </location>
</feature>
<feature type="helix" evidence="6">
    <location>
        <begin position="102"/>
        <end position="122"/>
    </location>
</feature>
<feature type="helix" evidence="6">
    <location>
        <begin position="125"/>
        <end position="127"/>
    </location>
</feature>
<feature type="strand" evidence="6">
    <location>
        <begin position="128"/>
        <end position="132"/>
    </location>
</feature>
<feature type="strand" evidence="6">
    <location>
        <begin position="142"/>
        <end position="146"/>
    </location>
</feature>
<feature type="strand" evidence="6">
    <location>
        <begin position="155"/>
        <end position="158"/>
    </location>
</feature>
<feature type="strand" evidence="6">
    <location>
        <begin position="163"/>
        <end position="165"/>
    </location>
</feature>
<feature type="helix" evidence="6">
    <location>
        <begin position="168"/>
        <end position="172"/>
    </location>
</feature>
<feature type="strand" evidence="6">
    <location>
        <begin position="175"/>
        <end position="179"/>
    </location>
</feature>
<feature type="strand" evidence="4">
    <location>
        <begin position="186"/>
        <end position="189"/>
    </location>
</feature>
<feature type="helix" evidence="6">
    <location>
        <begin position="191"/>
        <end position="200"/>
    </location>
</feature>
<feature type="strand" evidence="6">
    <location>
        <begin position="206"/>
        <end position="208"/>
    </location>
</feature>
<feature type="strand" evidence="5">
    <location>
        <begin position="211"/>
        <end position="213"/>
    </location>
</feature>
<feature type="strand" evidence="6">
    <location>
        <begin position="214"/>
        <end position="217"/>
    </location>
</feature>
<feature type="helix" evidence="6">
    <location>
        <begin position="222"/>
        <end position="235"/>
    </location>
</feature>
<feature type="helix" evidence="6">
    <location>
        <begin position="239"/>
        <end position="245"/>
    </location>
</feature>
<feature type="helix" evidence="5">
    <location>
        <begin position="249"/>
        <end position="263"/>
    </location>
</feature>
<feature type="helix" evidence="5">
    <location>
        <begin position="265"/>
        <end position="267"/>
    </location>
</feature>
<feature type="helix" evidence="5">
    <location>
        <begin position="268"/>
        <end position="274"/>
    </location>
</feature>
<feature type="helix" evidence="5">
    <location>
        <begin position="279"/>
        <end position="289"/>
    </location>
</feature>
<evidence type="ECO:0000255" key="1">
    <source>
        <dbReference type="PROSITE-ProRule" id="PRU01012"/>
    </source>
</evidence>
<evidence type="ECO:0000269" key="2">
    <source>
    </source>
</evidence>
<evidence type="ECO:0000305" key="3"/>
<evidence type="ECO:0007829" key="4">
    <source>
        <dbReference type="PDB" id="5A7T"/>
    </source>
</evidence>
<evidence type="ECO:0007829" key="5">
    <source>
        <dbReference type="PDB" id="5A7Y"/>
    </source>
</evidence>
<evidence type="ECO:0007829" key="6">
    <source>
        <dbReference type="PDB" id="5A7Z"/>
    </source>
</evidence>
<comment type="function">
    <text evidence="2">Catalyzes the S-adenosyl-L-methionine-dependent formation of N(1)-methyladenine at position 9 (m1A9) in tRNA.</text>
</comment>
<comment type="catalytic activity">
    <reaction evidence="2">
        <text>adenosine(9) in tRNA + S-adenosyl-L-methionine = N(1)-methyladenosine(9) in tRNA + S-adenosyl-L-homocysteine + H(+)</text>
        <dbReference type="Rhea" id="RHEA:43148"/>
        <dbReference type="Rhea" id="RHEA-COMP:10363"/>
        <dbReference type="Rhea" id="RHEA-COMP:10364"/>
        <dbReference type="ChEBI" id="CHEBI:15378"/>
        <dbReference type="ChEBI" id="CHEBI:57856"/>
        <dbReference type="ChEBI" id="CHEBI:59789"/>
        <dbReference type="ChEBI" id="CHEBI:74411"/>
        <dbReference type="ChEBI" id="CHEBI:74491"/>
        <dbReference type="EC" id="2.1.1.218"/>
    </reaction>
</comment>
<comment type="subcellular location">
    <subcellularLocation>
        <location evidence="3">Cytoplasm</location>
    </subcellularLocation>
</comment>
<comment type="similarity">
    <text evidence="1">Belongs to the class IV-like SAM-binding methyltransferase superfamily. TRM10 family.</text>
</comment>